<reference key="1">
    <citation type="journal article" date="2011" name="J. Bacteriol.">
        <title>Genome sequence of lineage III Listeria monocytogenes strain HCC23.</title>
        <authorList>
            <person name="Steele C.L."/>
            <person name="Donaldson J.R."/>
            <person name="Paul D."/>
            <person name="Banes M.M."/>
            <person name="Arick T."/>
            <person name="Bridges S.M."/>
            <person name="Lawrence M.L."/>
        </authorList>
    </citation>
    <scope>NUCLEOTIDE SEQUENCE [LARGE SCALE GENOMIC DNA]</scope>
    <source>
        <strain>HCC23</strain>
    </source>
</reference>
<comment type="function">
    <text evidence="1">IGPS catalyzes the conversion of PRFAR and glutamine to IGP, AICAR and glutamate. The HisF subunit catalyzes the cyclization activity that produces IGP and AICAR from PRFAR using the ammonia provided by the HisH subunit.</text>
</comment>
<comment type="catalytic activity">
    <reaction evidence="1">
        <text>5-[(5-phospho-1-deoxy-D-ribulos-1-ylimino)methylamino]-1-(5-phospho-beta-D-ribosyl)imidazole-4-carboxamide + L-glutamine = D-erythro-1-(imidazol-4-yl)glycerol 3-phosphate + 5-amino-1-(5-phospho-beta-D-ribosyl)imidazole-4-carboxamide + L-glutamate + H(+)</text>
        <dbReference type="Rhea" id="RHEA:24793"/>
        <dbReference type="ChEBI" id="CHEBI:15378"/>
        <dbReference type="ChEBI" id="CHEBI:29985"/>
        <dbReference type="ChEBI" id="CHEBI:58278"/>
        <dbReference type="ChEBI" id="CHEBI:58359"/>
        <dbReference type="ChEBI" id="CHEBI:58475"/>
        <dbReference type="ChEBI" id="CHEBI:58525"/>
        <dbReference type="EC" id="4.3.2.10"/>
    </reaction>
</comment>
<comment type="pathway">
    <text evidence="1">Amino-acid biosynthesis; L-histidine biosynthesis; L-histidine from 5-phospho-alpha-D-ribose 1-diphosphate: step 5/9.</text>
</comment>
<comment type="subunit">
    <text evidence="1">Heterodimer of HisH and HisF.</text>
</comment>
<comment type="subcellular location">
    <subcellularLocation>
        <location evidence="1">Cytoplasm</location>
    </subcellularLocation>
</comment>
<comment type="similarity">
    <text evidence="1">Belongs to the HisA/HisF family.</text>
</comment>
<name>HIS6_LISMH</name>
<feature type="chain" id="PRO_1000148925" description="Imidazole glycerol phosphate synthase subunit HisF">
    <location>
        <begin position="1"/>
        <end position="232"/>
    </location>
</feature>
<feature type="active site" evidence="1">
    <location>
        <position position="11"/>
    </location>
</feature>
<feature type="active site" evidence="1">
    <location>
        <position position="130"/>
    </location>
</feature>
<keyword id="KW-0028">Amino-acid biosynthesis</keyword>
<keyword id="KW-0963">Cytoplasm</keyword>
<keyword id="KW-0368">Histidine biosynthesis</keyword>
<keyword id="KW-0456">Lyase</keyword>
<evidence type="ECO:0000255" key="1">
    <source>
        <dbReference type="HAMAP-Rule" id="MF_01013"/>
    </source>
</evidence>
<dbReference type="EC" id="4.3.2.10" evidence="1"/>
<dbReference type="EMBL" id="CP001175">
    <property type="protein sequence ID" value="ACK40407.1"/>
    <property type="molecule type" value="Genomic_DNA"/>
</dbReference>
<dbReference type="SMR" id="B8DA62"/>
<dbReference type="KEGG" id="lmh:LMHCC_2068"/>
<dbReference type="HOGENOM" id="CLU_048577_4_0_9"/>
<dbReference type="UniPathway" id="UPA00031">
    <property type="reaction ID" value="UER00010"/>
</dbReference>
<dbReference type="GO" id="GO:0005737">
    <property type="term" value="C:cytoplasm"/>
    <property type="evidence" value="ECO:0007669"/>
    <property type="project" value="UniProtKB-SubCell"/>
</dbReference>
<dbReference type="GO" id="GO:0000107">
    <property type="term" value="F:imidazoleglycerol-phosphate synthase activity"/>
    <property type="evidence" value="ECO:0007669"/>
    <property type="project" value="UniProtKB-UniRule"/>
</dbReference>
<dbReference type="GO" id="GO:0016829">
    <property type="term" value="F:lyase activity"/>
    <property type="evidence" value="ECO:0007669"/>
    <property type="project" value="UniProtKB-KW"/>
</dbReference>
<dbReference type="GO" id="GO:0000105">
    <property type="term" value="P:L-histidine biosynthetic process"/>
    <property type="evidence" value="ECO:0007669"/>
    <property type="project" value="UniProtKB-UniRule"/>
</dbReference>
<dbReference type="CDD" id="cd04731">
    <property type="entry name" value="HisF"/>
    <property type="match status" value="1"/>
</dbReference>
<dbReference type="Gene3D" id="3.20.20.70">
    <property type="entry name" value="Aldolase class I"/>
    <property type="match status" value="1"/>
</dbReference>
<dbReference type="HAMAP" id="MF_01013">
    <property type="entry name" value="HisF"/>
    <property type="match status" value="1"/>
</dbReference>
<dbReference type="InterPro" id="IPR013785">
    <property type="entry name" value="Aldolase_TIM"/>
</dbReference>
<dbReference type="InterPro" id="IPR006062">
    <property type="entry name" value="His_biosynth"/>
</dbReference>
<dbReference type="InterPro" id="IPR004651">
    <property type="entry name" value="HisF"/>
</dbReference>
<dbReference type="InterPro" id="IPR050064">
    <property type="entry name" value="IGPS_HisA/HisF"/>
</dbReference>
<dbReference type="InterPro" id="IPR011060">
    <property type="entry name" value="RibuloseP-bd_barrel"/>
</dbReference>
<dbReference type="NCBIfam" id="TIGR00735">
    <property type="entry name" value="hisF"/>
    <property type="match status" value="1"/>
</dbReference>
<dbReference type="PANTHER" id="PTHR21235:SF2">
    <property type="entry name" value="IMIDAZOLE GLYCEROL PHOSPHATE SYNTHASE HISHF"/>
    <property type="match status" value="1"/>
</dbReference>
<dbReference type="PANTHER" id="PTHR21235">
    <property type="entry name" value="IMIDAZOLE GLYCEROL PHOSPHATE SYNTHASE SUBUNIT HISF/H IGP SYNTHASE SUBUNIT HISF/H"/>
    <property type="match status" value="1"/>
</dbReference>
<dbReference type="Pfam" id="PF00977">
    <property type="entry name" value="His_biosynth"/>
    <property type="match status" value="1"/>
</dbReference>
<dbReference type="SUPFAM" id="SSF51366">
    <property type="entry name" value="Ribulose-phoshate binding barrel"/>
    <property type="match status" value="1"/>
</dbReference>
<sequence length="232" mass="24550">MLTKRIIPCLDVTAGRVVKGVNFVSLTDVGDPVEIAKAYNEAGADELVFLDITATVELRQTMIDVVERTAEQVFIPLTVGGGISSVSDMKELLQAGADKISLNSAAIKRPDLIQEGADKFGNQCIVVAIDAKWNGTNWSVFTRGGRNDTGLDAITWAKKAVQLGAGEILLTSMDGDGTKNGYDIPLTKAISEAVSVPVIASGGCGNAAHMAEVFEKQTQPPHSPQVFFTTAN</sequence>
<gene>
    <name evidence="1" type="primary">hisF</name>
    <name type="ordered locus">LMHCC_2068</name>
</gene>
<proteinExistence type="inferred from homology"/>
<protein>
    <recommendedName>
        <fullName evidence="1">Imidazole glycerol phosphate synthase subunit HisF</fullName>
        <ecNumber evidence="1">4.3.2.10</ecNumber>
    </recommendedName>
    <alternativeName>
        <fullName evidence="1">IGP synthase cyclase subunit</fullName>
    </alternativeName>
    <alternativeName>
        <fullName evidence="1">IGP synthase subunit HisF</fullName>
    </alternativeName>
    <alternativeName>
        <fullName evidence="1">ImGP synthase subunit HisF</fullName>
        <shortName evidence="1">IGPS subunit HisF</shortName>
    </alternativeName>
</protein>
<organism>
    <name type="scientific">Listeria monocytogenes serotype 4a (strain HCC23)</name>
    <dbReference type="NCBI Taxonomy" id="552536"/>
    <lineage>
        <taxon>Bacteria</taxon>
        <taxon>Bacillati</taxon>
        <taxon>Bacillota</taxon>
        <taxon>Bacilli</taxon>
        <taxon>Bacillales</taxon>
        <taxon>Listeriaceae</taxon>
        <taxon>Listeria</taxon>
    </lineage>
</organism>
<accession>B8DA62</accession>